<accession>Q9FBB7</accession>
<accession>Q7D4F4</accession>
<protein>
    <recommendedName>
        <fullName evidence="1">Acetyl-coenzyme A carboxylase carboxyl transferase subunit alpha</fullName>
        <shortName evidence="1">ACCase subunit alpha</shortName>
        <shortName evidence="1">Acetyl-CoA carboxylase carboxyltransferase subunit alpha</shortName>
        <ecNumber evidence="1">2.1.3.15</ecNumber>
    </recommendedName>
</protein>
<dbReference type="EC" id="2.1.3.15" evidence="1"/>
<dbReference type="EMBL" id="AE005672">
    <property type="protein sequence ID" value="AAK74590.1"/>
    <property type="molecule type" value="Genomic_DNA"/>
</dbReference>
<dbReference type="PIR" id="E95049">
    <property type="entry name" value="E95049"/>
</dbReference>
<dbReference type="RefSeq" id="WP_001017398.1">
    <property type="nucleotide sequence ID" value="NZ_CP155539.1"/>
</dbReference>
<dbReference type="SMR" id="Q9FBB7"/>
<dbReference type="PaxDb" id="170187-SP_0427"/>
<dbReference type="EnsemblBacteria" id="AAK74590">
    <property type="protein sequence ID" value="AAK74590"/>
    <property type="gene ID" value="SP_0427"/>
</dbReference>
<dbReference type="KEGG" id="spn:SP_0427"/>
<dbReference type="eggNOG" id="COG0825">
    <property type="taxonomic scope" value="Bacteria"/>
</dbReference>
<dbReference type="PhylomeDB" id="Q9FBB7"/>
<dbReference type="BioCyc" id="SPNE170187:G1FZB-442-MONOMER"/>
<dbReference type="UniPathway" id="UPA00655">
    <property type="reaction ID" value="UER00711"/>
</dbReference>
<dbReference type="Proteomes" id="UP000000585">
    <property type="component" value="Chromosome"/>
</dbReference>
<dbReference type="GO" id="GO:0009317">
    <property type="term" value="C:acetyl-CoA carboxylase complex"/>
    <property type="evidence" value="ECO:0007669"/>
    <property type="project" value="InterPro"/>
</dbReference>
<dbReference type="GO" id="GO:0003989">
    <property type="term" value="F:acetyl-CoA carboxylase activity"/>
    <property type="evidence" value="ECO:0007669"/>
    <property type="project" value="InterPro"/>
</dbReference>
<dbReference type="GO" id="GO:0005524">
    <property type="term" value="F:ATP binding"/>
    <property type="evidence" value="ECO:0007669"/>
    <property type="project" value="UniProtKB-KW"/>
</dbReference>
<dbReference type="GO" id="GO:0016743">
    <property type="term" value="F:carboxyl- or carbamoyltransferase activity"/>
    <property type="evidence" value="ECO:0007669"/>
    <property type="project" value="UniProtKB-UniRule"/>
</dbReference>
<dbReference type="GO" id="GO:0006633">
    <property type="term" value="P:fatty acid biosynthetic process"/>
    <property type="evidence" value="ECO:0007669"/>
    <property type="project" value="UniProtKB-KW"/>
</dbReference>
<dbReference type="GO" id="GO:2001295">
    <property type="term" value="P:malonyl-CoA biosynthetic process"/>
    <property type="evidence" value="ECO:0007669"/>
    <property type="project" value="UniProtKB-UniRule"/>
</dbReference>
<dbReference type="Gene3D" id="3.90.226.10">
    <property type="entry name" value="2-enoyl-CoA Hydratase, Chain A, domain 1"/>
    <property type="match status" value="1"/>
</dbReference>
<dbReference type="HAMAP" id="MF_00823">
    <property type="entry name" value="AcetylCoA_CT_alpha"/>
    <property type="match status" value="1"/>
</dbReference>
<dbReference type="InterPro" id="IPR001095">
    <property type="entry name" value="Acetyl_CoA_COase_a_su"/>
</dbReference>
<dbReference type="InterPro" id="IPR029045">
    <property type="entry name" value="ClpP/crotonase-like_dom_sf"/>
</dbReference>
<dbReference type="InterPro" id="IPR011763">
    <property type="entry name" value="COA_CT_C"/>
</dbReference>
<dbReference type="NCBIfam" id="TIGR00513">
    <property type="entry name" value="accA"/>
    <property type="match status" value="1"/>
</dbReference>
<dbReference type="NCBIfam" id="NF041504">
    <property type="entry name" value="AccA_sub"/>
    <property type="match status" value="1"/>
</dbReference>
<dbReference type="NCBIfam" id="NF004344">
    <property type="entry name" value="PRK05724.1"/>
    <property type="match status" value="1"/>
</dbReference>
<dbReference type="NCBIfam" id="NF008971">
    <property type="entry name" value="PRK12319.1"/>
    <property type="match status" value="1"/>
</dbReference>
<dbReference type="PANTHER" id="PTHR42853">
    <property type="entry name" value="ACETYL-COENZYME A CARBOXYLASE CARBOXYL TRANSFERASE SUBUNIT ALPHA"/>
    <property type="match status" value="1"/>
</dbReference>
<dbReference type="PANTHER" id="PTHR42853:SF3">
    <property type="entry name" value="ACETYL-COENZYME A CARBOXYLASE CARBOXYL TRANSFERASE SUBUNIT ALPHA, CHLOROPLASTIC"/>
    <property type="match status" value="1"/>
</dbReference>
<dbReference type="Pfam" id="PF03255">
    <property type="entry name" value="ACCA"/>
    <property type="match status" value="1"/>
</dbReference>
<dbReference type="PRINTS" id="PR01069">
    <property type="entry name" value="ACCCTRFRASEA"/>
</dbReference>
<dbReference type="SUPFAM" id="SSF52096">
    <property type="entry name" value="ClpP/crotonase"/>
    <property type="match status" value="1"/>
</dbReference>
<dbReference type="PROSITE" id="PS50989">
    <property type="entry name" value="COA_CT_CTER"/>
    <property type="match status" value="1"/>
</dbReference>
<sequence length="255" mass="28248">MNIAKIVREAREQSRLTTLDFATGIFDEFIQLHGDRSFRDDGAVVGGIGWLGDQAVTVVGIQKGKSLQDNLKRNFGQPHPEGYRKALRLMKQAEKFGRPVVTFINTAGAYPGVGAEERGQGEAIARNLMEMSDLKVPIIAIIIGEGGSGGALALAVADRVWMLENSIYAILSPEGFASILWKDGTRAMEAAELMKITSHELLEMDVVDKVISEIGLSSKELIKSVKKELQTELARLSQKPLEELLEERYQRFRKY</sequence>
<gene>
    <name evidence="1" type="primary">accA</name>
    <name type="ordered locus">SP_0427</name>
</gene>
<feature type="chain" id="PRO_0000223836" description="Acetyl-coenzyme A carboxylase carboxyl transferase subunit alpha">
    <location>
        <begin position="1"/>
        <end position="255"/>
    </location>
</feature>
<feature type="domain" description="CoA carboxyltransferase C-terminal" evidence="2">
    <location>
        <begin position="1"/>
        <end position="235"/>
    </location>
</feature>
<keyword id="KW-0067">ATP-binding</keyword>
<keyword id="KW-0963">Cytoplasm</keyword>
<keyword id="KW-0275">Fatty acid biosynthesis</keyword>
<keyword id="KW-0276">Fatty acid metabolism</keyword>
<keyword id="KW-0444">Lipid biosynthesis</keyword>
<keyword id="KW-0443">Lipid metabolism</keyword>
<keyword id="KW-0547">Nucleotide-binding</keyword>
<keyword id="KW-1185">Reference proteome</keyword>
<keyword id="KW-0808">Transferase</keyword>
<comment type="function">
    <text evidence="1">Component of the acetyl coenzyme A carboxylase (ACC) complex. First, biotin carboxylase catalyzes the carboxylation of biotin on its carrier protein (BCCP) and then the CO(2) group is transferred by the carboxyltransferase to acetyl-CoA to form malonyl-CoA.</text>
</comment>
<comment type="catalytic activity">
    <reaction evidence="1">
        <text>N(6)-carboxybiotinyl-L-lysyl-[protein] + acetyl-CoA = N(6)-biotinyl-L-lysyl-[protein] + malonyl-CoA</text>
        <dbReference type="Rhea" id="RHEA:54728"/>
        <dbReference type="Rhea" id="RHEA-COMP:10505"/>
        <dbReference type="Rhea" id="RHEA-COMP:10506"/>
        <dbReference type="ChEBI" id="CHEBI:57288"/>
        <dbReference type="ChEBI" id="CHEBI:57384"/>
        <dbReference type="ChEBI" id="CHEBI:83144"/>
        <dbReference type="ChEBI" id="CHEBI:83145"/>
        <dbReference type="EC" id="2.1.3.15"/>
    </reaction>
</comment>
<comment type="activity regulation">
    <text>Inhibited by pyrrolidine dione antibiotic moiramide B (CPD1).</text>
</comment>
<comment type="pathway">
    <text evidence="1">Lipid metabolism; malonyl-CoA biosynthesis; malonyl-CoA from acetyl-CoA: step 1/1.</text>
</comment>
<comment type="subunit">
    <text evidence="1">Acetyl-CoA carboxylase is a heterohexamer composed of biotin carboxyl carrier protein (AccB), biotin carboxylase (AccC) and two subunits each of ACCase subunit alpha (AccA) and ACCase subunit beta (AccD).</text>
</comment>
<comment type="subcellular location">
    <subcellularLocation>
        <location evidence="1">Cytoplasm</location>
    </subcellularLocation>
</comment>
<comment type="similarity">
    <text evidence="1">Belongs to the AccA family.</text>
</comment>
<proteinExistence type="evidence at protein level"/>
<evidence type="ECO:0000255" key="1">
    <source>
        <dbReference type="HAMAP-Rule" id="MF_00823"/>
    </source>
</evidence>
<evidence type="ECO:0000255" key="2">
    <source>
        <dbReference type="PROSITE-ProRule" id="PRU01137"/>
    </source>
</evidence>
<name>ACCA_STRPN</name>
<reference key="1">
    <citation type="journal article" date="2001" name="Science">
        <title>Complete genome sequence of a virulent isolate of Streptococcus pneumoniae.</title>
        <authorList>
            <person name="Tettelin H."/>
            <person name="Nelson K.E."/>
            <person name="Paulsen I.T."/>
            <person name="Eisen J.A."/>
            <person name="Read T.D."/>
            <person name="Peterson S.N."/>
            <person name="Heidelberg J.F."/>
            <person name="DeBoy R.T."/>
            <person name="Haft D.H."/>
            <person name="Dodson R.J."/>
            <person name="Durkin A.S."/>
            <person name="Gwinn M.L."/>
            <person name="Kolonay J.F."/>
            <person name="Nelson W.C."/>
            <person name="Peterson J.D."/>
            <person name="Umayam L.A."/>
            <person name="White O."/>
            <person name="Salzberg S.L."/>
            <person name="Lewis M.R."/>
            <person name="Radune D."/>
            <person name="Holtzapple E.K."/>
            <person name="Khouri H.M."/>
            <person name="Wolf A.M."/>
            <person name="Utterback T.R."/>
            <person name="Hansen C.L."/>
            <person name="McDonald L.A."/>
            <person name="Feldblyum T.V."/>
            <person name="Angiuoli S.V."/>
            <person name="Dickinson T."/>
            <person name="Hickey E.K."/>
            <person name="Holt I.E."/>
            <person name="Loftus B.J."/>
            <person name="Yang F."/>
            <person name="Smith H.O."/>
            <person name="Venter J.C."/>
            <person name="Dougherty B.A."/>
            <person name="Morrison D.A."/>
            <person name="Hollingshead S.K."/>
            <person name="Fraser C.M."/>
        </authorList>
    </citation>
    <scope>NUCLEOTIDE SEQUENCE [LARGE SCALE GENOMIC DNA]</scope>
    <source>
        <strain>ATCC BAA-334 / TIGR4</strain>
    </source>
</reference>
<reference key="2">
    <citation type="journal article" date="2004" name="J. Biol. Chem.">
        <title>Identification and characterization of the first class of potent bacterial acetyl-CoA carboxylase inhibitors with antibacterial activity.</title>
        <authorList>
            <person name="Freiberg C."/>
            <person name="Brunner N.A."/>
            <person name="Schiffer G."/>
            <person name="Lampe T."/>
            <person name="Pohlmann J."/>
            <person name="Brands M."/>
            <person name="Raabe M."/>
            <person name="Haebich D."/>
            <person name="Ziegelbauer K."/>
        </authorList>
    </citation>
    <scope>CHARACTERIZATION OF ACTIVITY REGULATION</scope>
    <source>
        <strain>G9A</strain>
    </source>
</reference>
<organism>
    <name type="scientific">Streptococcus pneumoniae serotype 4 (strain ATCC BAA-334 / TIGR4)</name>
    <dbReference type="NCBI Taxonomy" id="170187"/>
    <lineage>
        <taxon>Bacteria</taxon>
        <taxon>Bacillati</taxon>
        <taxon>Bacillota</taxon>
        <taxon>Bacilli</taxon>
        <taxon>Lactobacillales</taxon>
        <taxon>Streptococcaceae</taxon>
        <taxon>Streptococcus</taxon>
    </lineage>
</organism>